<accession>Q8ZD41</accession>
<accession>Q0WDE0</accession>
<evidence type="ECO:0000250" key="1"/>
<evidence type="ECO:0000255" key="2">
    <source>
        <dbReference type="HAMAP-Rule" id="MF_00300"/>
    </source>
</evidence>
<evidence type="ECO:0000305" key="3"/>
<gene>
    <name evidence="2" type="primary">aroC</name>
    <name type="ordered locus">YPO2751</name>
    <name type="ordered locus">y1585</name>
    <name type="ordered locus">YP_2412</name>
</gene>
<organism>
    <name type="scientific">Yersinia pestis</name>
    <dbReference type="NCBI Taxonomy" id="632"/>
    <lineage>
        <taxon>Bacteria</taxon>
        <taxon>Pseudomonadati</taxon>
        <taxon>Pseudomonadota</taxon>
        <taxon>Gammaproteobacteria</taxon>
        <taxon>Enterobacterales</taxon>
        <taxon>Yersiniaceae</taxon>
        <taxon>Yersinia</taxon>
    </lineage>
</organism>
<reference key="1">
    <citation type="journal article" date="2001" name="Nature">
        <title>Genome sequence of Yersinia pestis, the causative agent of plague.</title>
        <authorList>
            <person name="Parkhill J."/>
            <person name="Wren B.W."/>
            <person name="Thomson N.R."/>
            <person name="Titball R.W."/>
            <person name="Holden M.T.G."/>
            <person name="Prentice M.B."/>
            <person name="Sebaihia M."/>
            <person name="James K.D."/>
            <person name="Churcher C.M."/>
            <person name="Mungall K.L."/>
            <person name="Baker S."/>
            <person name="Basham D."/>
            <person name="Bentley S.D."/>
            <person name="Brooks K."/>
            <person name="Cerdeno-Tarraga A.-M."/>
            <person name="Chillingworth T."/>
            <person name="Cronin A."/>
            <person name="Davies R.M."/>
            <person name="Davis P."/>
            <person name="Dougan G."/>
            <person name="Feltwell T."/>
            <person name="Hamlin N."/>
            <person name="Holroyd S."/>
            <person name="Jagels K."/>
            <person name="Karlyshev A.V."/>
            <person name="Leather S."/>
            <person name="Moule S."/>
            <person name="Oyston P.C.F."/>
            <person name="Quail M.A."/>
            <person name="Rutherford K.M."/>
            <person name="Simmonds M."/>
            <person name="Skelton J."/>
            <person name="Stevens K."/>
            <person name="Whitehead S."/>
            <person name="Barrell B.G."/>
        </authorList>
    </citation>
    <scope>NUCLEOTIDE SEQUENCE [LARGE SCALE GENOMIC DNA]</scope>
    <source>
        <strain>CO-92 / Biovar Orientalis</strain>
    </source>
</reference>
<reference key="2">
    <citation type="journal article" date="2002" name="J. Bacteriol.">
        <title>Genome sequence of Yersinia pestis KIM.</title>
        <authorList>
            <person name="Deng W."/>
            <person name="Burland V."/>
            <person name="Plunkett G. III"/>
            <person name="Boutin A."/>
            <person name="Mayhew G.F."/>
            <person name="Liss P."/>
            <person name="Perna N.T."/>
            <person name="Rose D.J."/>
            <person name="Mau B."/>
            <person name="Zhou S."/>
            <person name="Schwartz D.C."/>
            <person name="Fetherston J.D."/>
            <person name="Lindler L.E."/>
            <person name="Brubaker R.R."/>
            <person name="Plano G.V."/>
            <person name="Straley S.C."/>
            <person name="McDonough K.A."/>
            <person name="Nilles M.L."/>
            <person name="Matson J.S."/>
            <person name="Blattner F.R."/>
            <person name="Perry R.D."/>
        </authorList>
    </citation>
    <scope>NUCLEOTIDE SEQUENCE [LARGE SCALE GENOMIC DNA]</scope>
    <source>
        <strain>KIM10+ / Biovar Mediaevalis</strain>
    </source>
</reference>
<reference key="3">
    <citation type="journal article" date="2004" name="DNA Res.">
        <title>Complete genome sequence of Yersinia pestis strain 91001, an isolate avirulent to humans.</title>
        <authorList>
            <person name="Song Y."/>
            <person name="Tong Z."/>
            <person name="Wang J."/>
            <person name="Wang L."/>
            <person name="Guo Z."/>
            <person name="Han Y."/>
            <person name="Zhang J."/>
            <person name="Pei D."/>
            <person name="Zhou D."/>
            <person name="Qin H."/>
            <person name="Pang X."/>
            <person name="Han Y."/>
            <person name="Zhai J."/>
            <person name="Li M."/>
            <person name="Cui B."/>
            <person name="Qi Z."/>
            <person name="Jin L."/>
            <person name="Dai R."/>
            <person name="Chen F."/>
            <person name="Li S."/>
            <person name="Ye C."/>
            <person name="Du Z."/>
            <person name="Lin W."/>
            <person name="Wang J."/>
            <person name="Yu J."/>
            <person name="Yang H."/>
            <person name="Wang J."/>
            <person name="Huang P."/>
            <person name="Yang R."/>
        </authorList>
    </citation>
    <scope>NUCLEOTIDE SEQUENCE [LARGE SCALE GENOMIC DNA]</scope>
    <source>
        <strain>91001 / Biovar Mediaevalis</strain>
    </source>
</reference>
<keyword id="KW-0028">Amino-acid biosynthesis</keyword>
<keyword id="KW-0057">Aromatic amino acid biosynthesis</keyword>
<keyword id="KW-0274">FAD</keyword>
<keyword id="KW-0285">Flavoprotein</keyword>
<keyword id="KW-0288">FMN</keyword>
<keyword id="KW-0456">Lyase</keyword>
<keyword id="KW-0521">NADP</keyword>
<keyword id="KW-1185">Reference proteome</keyword>
<sequence length="361" mass="38982">MAGNSIGQFFRVTTFGESHGIALGCIIDGVPPGIPITEADIQLDLDRRRPGTSRYTTQRRELDQVRILSGVFEGVTTGTSIGLMIENTDQRSQDYSAIKDVFRPGHADYTYEQKYGVRDYRGGGRSSARETAMRVAAGAIAKKYLAQKFGVQVRGYLAQMGDVSCDLLDWDLVEQNPFFCPDASKLEPLDALMRELKKAGDSIGAKITVVAENVPVGLGEPVFDRLDADLAHALMSINAVKGVEIGDGFAVVTKRGSENRDEITPQGFQSNHAGGILGGISSGQPVVAHIALKPTSSIMVPGQTINRQGEAVEMVTRGRHDPCVGIRAVPIAEAMMAIVLMDHLLRQRAQCGDVASDVPRW</sequence>
<comment type="function">
    <text evidence="2">Catalyzes the anti-1,4-elimination of the C-3 phosphate and the C-6 proR hydrogen from 5-enolpyruvylshikimate-3-phosphate (EPSP) to yield chorismate, which is the branch point compound that serves as the starting substrate for the three terminal pathways of aromatic amino acid biosynthesis. This reaction introduces a second double bond into the aromatic ring system.</text>
</comment>
<comment type="catalytic activity">
    <reaction evidence="2">
        <text>5-O-(1-carboxyvinyl)-3-phosphoshikimate = chorismate + phosphate</text>
        <dbReference type="Rhea" id="RHEA:21020"/>
        <dbReference type="ChEBI" id="CHEBI:29748"/>
        <dbReference type="ChEBI" id="CHEBI:43474"/>
        <dbReference type="ChEBI" id="CHEBI:57701"/>
        <dbReference type="EC" id="4.2.3.5"/>
    </reaction>
</comment>
<comment type="cofactor">
    <cofactor evidence="2">
        <name>FMNH2</name>
        <dbReference type="ChEBI" id="CHEBI:57618"/>
    </cofactor>
    <text evidence="2">Reduced FMN (FMNH(2)).</text>
</comment>
<comment type="pathway">
    <text evidence="2">Metabolic intermediate biosynthesis; chorismate biosynthesis; chorismate from D-erythrose 4-phosphate and phosphoenolpyruvate: step 7/7.</text>
</comment>
<comment type="subunit">
    <text evidence="2">Homotetramer.</text>
</comment>
<comment type="similarity">
    <text evidence="2">Belongs to the chorismate synthase family.</text>
</comment>
<comment type="sequence caution" evidence="3">
    <conflict type="erroneous initiation">
        <sequence resource="EMBL-CDS" id="AAM85154"/>
    </conflict>
    <text>Extended N-terminus.</text>
</comment>
<comment type="sequence caution" evidence="3">
    <conflict type="erroneous initiation">
        <sequence resource="EMBL-CDS" id="AAS62617"/>
    </conflict>
    <text>Extended N-terminus.</text>
</comment>
<feature type="initiator methionine" description="Removed" evidence="1">
    <location>
        <position position="1"/>
    </location>
</feature>
<feature type="chain" id="PRO_0000140683" description="Chorismate synthase">
    <location>
        <begin position="2"/>
        <end position="361"/>
    </location>
</feature>
<feature type="binding site" evidence="2">
    <location>
        <position position="48"/>
    </location>
    <ligand>
        <name>NADP(+)</name>
        <dbReference type="ChEBI" id="CHEBI:58349"/>
    </ligand>
</feature>
<feature type="binding site" evidence="2">
    <location>
        <position position="54"/>
    </location>
    <ligand>
        <name>NADP(+)</name>
        <dbReference type="ChEBI" id="CHEBI:58349"/>
    </ligand>
</feature>
<feature type="binding site" evidence="2">
    <location>
        <begin position="125"/>
        <end position="127"/>
    </location>
    <ligand>
        <name>FMN</name>
        <dbReference type="ChEBI" id="CHEBI:58210"/>
    </ligand>
</feature>
<feature type="binding site" evidence="2">
    <location>
        <begin position="238"/>
        <end position="239"/>
    </location>
    <ligand>
        <name>FMN</name>
        <dbReference type="ChEBI" id="CHEBI:58210"/>
    </ligand>
</feature>
<feature type="binding site" evidence="2">
    <location>
        <position position="278"/>
    </location>
    <ligand>
        <name>FMN</name>
        <dbReference type="ChEBI" id="CHEBI:58210"/>
    </ligand>
</feature>
<feature type="binding site" evidence="2">
    <location>
        <begin position="293"/>
        <end position="297"/>
    </location>
    <ligand>
        <name>FMN</name>
        <dbReference type="ChEBI" id="CHEBI:58210"/>
    </ligand>
</feature>
<feature type="binding site" evidence="2">
    <location>
        <position position="319"/>
    </location>
    <ligand>
        <name>FMN</name>
        <dbReference type="ChEBI" id="CHEBI:58210"/>
    </ligand>
</feature>
<dbReference type="EC" id="4.2.3.5" evidence="2"/>
<dbReference type="EMBL" id="AL590842">
    <property type="protein sequence ID" value="CAL21370.1"/>
    <property type="molecule type" value="Genomic_DNA"/>
</dbReference>
<dbReference type="EMBL" id="AE009952">
    <property type="protein sequence ID" value="AAM85154.1"/>
    <property type="status" value="ALT_INIT"/>
    <property type="molecule type" value="Genomic_DNA"/>
</dbReference>
<dbReference type="EMBL" id="AE017042">
    <property type="protein sequence ID" value="AAS62617.1"/>
    <property type="status" value="ALT_INIT"/>
    <property type="molecule type" value="Genomic_DNA"/>
</dbReference>
<dbReference type="PIR" id="AG0335">
    <property type="entry name" value="AG0335"/>
</dbReference>
<dbReference type="RefSeq" id="WP_002209711.1">
    <property type="nucleotide sequence ID" value="NZ_WUCM01000012.1"/>
</dbReference>
<dbReference type="RefSeq" id="YP_002347698.1">
    <property type="nucleotide sequence ID" value="NC_003143.1"/>
</dbReference>
<dbReference type="SMR" id="Q8ZD41"/>
<dbReference type="IntAct" id="Q8ZD41">
    <property type="interactions" value="1"/>
</dbReference>
<dbReference type="STRING" id="214092.YPO2751"/>
<dbReference type="PaxDb" id="214092-YPO2751"/>
<dbReference type="DNASU" id="1146532"/>
<dbReference type="EnsemblBacteria" id="AAS62617">
    <property type="protein sequence ID" value="AAS62617"/>
    <property type="gene ID" value="YP_2412"/>
</dbReference>
<dbReference type="GeneID" id="57975938"/>
<dbReference type="KEGG" id="ype:YPO2751"/>
<dbReference type="KEGG" id="ypk:y1585"/>
<dbReference type="KEGG" id="ypm:YP_2412"/>
<dbReference type="PATRIC" id="fig|214092.21.peg.3195"/>
<dbReference type="eggNOG" id="COG0082">
    <property type="taxonomic scope" value="Bacteria"/>
</dbReference>
<dbReference type="HOGENOM" id="CLU_034547_0_2_6"/>
<dbReference type="OMA" id="MLSINAV"/>
<dbReference type="OrthoDB" id="9771806at2"/>
<dbReference type="UniPathway" id="UPA00053">
    <property type="reaction ID" value="UER00090"/>
</dbReference>
<dbReference type="Proteomes" id="UP000000815">
    <property type="component" value="Chromosome"/>
</dbReference>
<dbReference type="Proteomes" id="UP000001019">
    <property type="component" value="Chromosome"/>
</dbReference>
<dbReference type="Proteomes" id="UP000002490">
    <property type="component" value="Chromosome"/>
</dbReference>
<dbReference type="GO" id="GO:0005829">
    <property type="term" value="C:cytosol"/>
    <property type="evidence" value="ECO:0000318"/>
    <property type="project" value="GO_Central"/>
</dbReference>
<dbReference type="GO" id="GO:0004107">
    <property type="term" value="F:chorismate synthase activity"/>
    <property type="evidence" value="ECO:0000318"/>
    <property type="project" value="GO_Central"/>
</dbReference>
<dbReference type="GO" id="GO:0010181">
    <property type="term" value="F:FMN binding"/>
    <property type="evidence" value="ECO:0000318"/>
    <property type="project" value="GO_Central"/>
</dbReference>
<dbReference type="GO" id="GO:0008652">
    <property type="term" value="P:amino acid biosynthetic process"/>
    <property type="evidence" value="ECO:0007669"/>
    <property type="project" value="UniProtKB-KW"/>
</dbReference>
<dbReference type="GO" id="GO:0009073">
    <property type="term" value="P:aromatic amino acid family biosynthetic process"/>
    <property type="evidence" value="ECO:0000318"/>
    <property type="project" value="GO_Central"/>
</dbReference>
<dbReference type="GO" id="GO:0009423">
    <property type="term" value="P:chorismate biosynthetic process"/>
    <property type="evidence" value="ECO:0000318"/>
    <property type="project" value="GO_Central"/>
</dbReference>
<dbReference type="CDD" id="cd07304">
    <property type="entry name" value="Chorismate_synthase"/>
    <property type="match status" value="1"/>
</dbReference>
<dbReference type="FunFam" id="3.60.150.10:FF:000001">
    <property type="entry name" value="Chorismate synthase"/>
    <property type="match status" value="1"/>
</dbReference>
<dbReference type="Gene3D" id="3.60.150.10">
    <property type="entry name" value="Chorismate synthase AroC"/>
    <property type="match status" value="1"/>
</dbReference>
<dbReference type="HAMAP" id="MF_00300">
    <property type="entry name" value="Chorismate_synth"/>
    <property type="match status" value="1"/>
</dbReference>
<dbReference type="InterPro" id="IPR000453">
    <property type="entry name" value="Chorismate_synth"/>
</dbReference>
<dbReference type="InterPro" id="IPR035904">
    <property type="entry name" value="Chorismate_synth_AroC_sf"/>
</dbReference>
<dbReference type="InterPro" id="IPR020541">
    <property type="entry name" value="Chorismate_synthase_CS"/>
</dbReference>
<dbReference type="NCBIfam" id="TIGR00033">
    <property type="entry name" value="aroC"/>
    <property type="match status" value="1"/>
</dbReference>
<dbReference type="NCBIfam" id="NF003793">
    <property type="entry name" value="PRK05382.1"/>
    <property type="match status" value="1"/>
</dbReference>
<dbReference type="PANTHER" id="PTHR21085">
    <property type="entry name" value="CHORISMATE SYNTHASE"/>
    <property type="match status" value="1"/>
</dbReference>
<dbReference type="PANTHER" id="PTHR21085:SF0">
    <property type="entry name" value="CHORISMATE SYNTHASE"/>
    <property type="match status" value="1"/>
</dbReference>
<dbReference type="Pfam" id="PF01264">
    <property type="entry name" value="Chorismate_synt"/>
    <property type="match status" value="1"/>
</dbReference>
<dbReference type="PIRSF" id="PIRSF001456">
    <property type="entry name" value="Chorismate_synth"/>
    <property type="match status" value="1"/>
</dbReference>
<dbReference type="SUPFAM" id="SSF103263">
    <property type="entry name" value="Chorismate synthase, AroC"/>
    <property type="match status" value="1"/>
</dbReference>
<dbReference type="PROSITE" id="PS00787">
    <property type="entry name" value="CHORISMATE_SYNTHASE_1"/>
    <property type="match status" value="1"/>
</dbReference>
<dbReference type="PROSITE" id="PS00788">
    <property type="entry name" value="CHORISMATE_SYNTHASE_2"/>
    <property type="match status" value="1"/>
</dbReference>
<dbReference type="PROSITE" id="PS00789">
    <property type="entry name" value="CHORISMATE_SYNTHASE_3"/>
    <property type="match status" value="1"/>
</dbReference>
<name>AROC_YERPE</name>
<protein>
    <recommendedName>
        <fullName evidence="2">Chorismate synthase</fullName>
        <shortName evidence="2">CS</shortName>
        <ecNumber evidence="2">4.2.3.5</ecNumber>
    </recommendedName>
    <alternativeName>
        <fullName evidence="2">5-enolpyruvylshikimate-3-phosphate phospholyase</fullName>
    </alternativeName>
</protein>
<proteinExistence type="inferred from homology"/>